<gene>
    <name type="primary">C4bpb</name>
</gene>
<organism>
    <name type="scientific">Rattus norvegicus</name>
    <name type="common">Rat</name>
    <dbReference type="NCBI Taxonomy" id="10116"/>
    <lineage>
        <taxon>Eukaryota</taxon>
        <taxon>Metazoa</taxon>
        <taxon>Chordata</taxon>
        <taxon>Craniata</taxon>
        <taxon>Vertebrata</taxon>
        <taxon>Euteleostomi</taxon>
        <taxon>Mammalia</taxon>
        <taxon>Eutheria</taxon>
        <taxon>Euarchontoglires</taxon>
        <taxon>Glires</taxon>
        <taxon>Rodentia</taxon>
        <taxon>Myomorpha</taxon>
        <taxon>Muroidea</taxon>
        <taxon>Muridae</taxon>
        <taxon>Murinae</taxon>
        <taxon>Rattus</taxon>
    </lineage>
</organism>
<name>C4BPB_RAT</name>
<sequence>MLCLVVCCLIWLISALDGSCSEPPPVNNSVFVGKETEEQILGIYLCIKGYHLVGKKSLVFDPSKEWNSTLPECLLGHCPDPVLENGKINSSGPVNISGKIMFECNDGYILKGSNWSQCLEDHTWAPPLPICRSRDCEPPETPVHGYFEGETFTSGSVVTYYCEDGYHLVGTQKVQCSDGEWSPSYPTCESIQEPPKSAEQSALEKAILAFQESKDLCNATENFVRQLREGGITMEELKCSLEMKKTKLKSDILLNYHS</sequence>
<keyword id="KW-0180">Complement pathway</keyword>
<keyword id="KW-1015">Disulfide bond</keyword>
<keyword id="KW-0325">Glycoprotein</keyword>
<keyword id="KW-0391">Immunity</keyword>
<keyword id="KW-0399">Innate immunity</keyword>
<keyword id="KW-1185">Reference proteome</keyword>
<keyword id="KW-0677">Repeat</keyword>
<keyword id="KW-0964">Secreted</keyword>
<keyword id="KW-0732">Signal</keyword>
<keyword id="KW-0768">Sushi</keyword>
<proteinExistence type="evidence at transcript level"/>
<feature type="signal peptide" evidence="1">
    <location>
        <begin position="1"/>
        <end position="15"/>
    </location>
</feature>
<feature type="chain" id="PRO_0000005893" description="C4b-binding protein beta chain">
    <location>
        <begin position="16"/>
        <end position="258"/>
    </location>
</feature>
<feature type="domain" description="Sushi 1; atypical; lacks a Cys" evidence="3">
    <location>
        <begin position="18"/>
        <end position="75"/>
    </location>
</feature>
<feature type="domain" description="Sushi 2" evidence="3">
    <location>
        <begin position="76"/>
        <end position="133"/>
    </location>
</feature>
<feature type="domain" description="Sushi 3" evidence="3">
    <location>
        <begin position="134"/>
        <end position="190"/>
    </location>
</feature>
<feature type="glycosylation site" description="N-linked (GlcNAc...) asparagine" evidence="2">
    <location>
        <position position="27"/>
    </location>
</feature>
<feature type="glycosylation site" description="N-linked (GlcNAc...) asparagine" evidence="2">
    <location>
        <position position="67"/>
    </location>
</feature>
<feature type="glycosylation site" description="N-linked (GlcNAc...) asparagine" evidence="2">
    <location>
        <position position="89"/>
    </location>
</feature>
<feature type="glycosylation site" description="N-linked (GlcNAc...) asparagine" evidence="2">
    <location>
        <position position="95"/>
    </location>
</feature>
<feature type="glycosylation site" description="N-linked (GlcNAc...) asparagine" evidence="2">
    <location>
        <position position="114"/>
    </location>
</feature>
<feature type="glycosylation site" description="N-linked (GlcNAc...) asparagine" evidence="2">
    <location>
        <position position="218"/>
    </location>
</feature>
<feature type="disulfide bond" evidence="3">
    <location>
        <begin position="46"/>
        <end position="73"/>
    </location>
</feature>
<feature type="disulfide bond" evidence="3">
    <location>
        <begin position="78"/>
        <end position="118"/>
    </location>
</feature>
<feature type="disulfide bond" evidence="3">
    <location>
        <begin position="104"/>
        <end position="131"/>
    </location>
</feature>
<feature type="disulfide bond" evidence="3">
    <location>
        <begin position="136"/>
        <end position="176"/>
    </location>
</feature>
<feature type="disulfide bond" evidence="3">
    <location>
        <begin position="162"/>
        <end position="188"/>
    </location>
</feature>
<feature type="disulfide bond" description="Interchain (with alpha chain)" evidence="3">
    <location>
        <position position="217"/>
    </location>
</feature>
<protein>
    <recommendedName>
        <fullName>C4b-binding protein beta chain</fullName>
    </recommendedName>
</protein>
<evidence type="ECO:0000250" key="1"/>
<evidence type="ECO:0000255" key="2"/>
<evidence type="ECO:0000255" key="3">
    <source>
        <dbReference type="PROSITE-ProRule" id="PRU00302"/>
    </source>
</evidence>
<reference key="1">
    <citation type="journal article" date="1997" name="J. Immunol.">
        <title>Molecular cloning of rat C4b binding protein alpha- and beta-chains: structural and functional relationships among human, bovine, rabbit, mouse, and rat proteins.</title>
        <authorList>
            <person name="Hillarp A."/>
            <person name="Wiklund H."/>
            <person name="Thern A."/>
            <person name="Dahlback B."/>
        </authorList>
    </citation>
    <scope>NUCLEOTIDE SEQUENCE [MRNA]</scope>
    <source>
        <strain>Sprague-Dawley</strain>
        <tissue>Liver</tissue>
    </source>
</reference>
<dbReference type="EMBL" id="Z50052">
    <property type="protein sequence ID" value="CAA90392.1"/>
    <property type="molecule type" value="mRNA"/>
</dbReference>
<dbReference type="PIR" id="S57960">
    <property type="entry name" value="S57960"/>
</dbReference>
<dbReference type="SMR" id="Q63515"/>
<dbReference type="FunCoup" id="Q63515">
    <property type="interactions" value="27"/>
</dbReference>
<dbReference type="STRING" id="10116.ENSRNOP00000005505"/>
<dbReference type="GlyCosmos" id="Q63515">
    <property type="glycosylation" value="6 sites, No reported glycans"/>
</dbReference>
<dbReference type="GlyGen" id="Q63515">
    <property type="glycosylation" value="6 sites"/>
</dbReference>
<dbReference type="PhosphoSitePlus" id="Q63515"/>
<dbReference type="PaxDb" id="10116-ENSRNOP00000005505"/>
<dbReference type="UCSC" id="RGD:2236">
    <property type="organism name" value="rat"/>
</dbReference>
<dbReference type="AGR" id="RGD:2236"/>
<dbReference type="RGD" id="2236">
    <property type="gene designation" value="C4bpb"/>
</dbReference>
<dbReference type="eggNOG" id="KOG4297">
    <property type="taxonomic scope" value="Eukaryota"/>
</dbReference>
<dbReference type="InParanoid" id="Q63515"/>
<dbReference type="OrthoDB" id="6480633at2759"/>
<dbReference type="PhylomeDB" id="Q63515"/>
<dbReference type="PRO" id="PR:Q63515"/>
<dbReference type="Proteomes" id="UP000002494">
    <property type="component" value="Unplaced"/>
</dbReference>
<dbReference type="GO" id="GO:0005615">
    <property type="term" value="C:extracellular space"/>
    <property type="evidence" value="ECO:0000266"/>
    <property type="project" value="RGD"/>
</dbReference>
<dbReference type="GO" id="GO:0006958">
    <property type="term" value="P:complement activation, classical pathway"/>
    <property type="evidence" value="ECO:0007669"/>
    <property type="project" value="UniProtKB-KW"/>
</dbReference>
<dbReference type="GO" id="GO:0045087">
    <property type="term" value="P:innate immune response"/>
    <property type="evidence" value="ECO:0007669"/>
    <property type="project" value="UniProtKB-KW"/>
</dbReference>
<dbReference type="GO" id="GO:0045959">
    <property type="term" value="P:negative regulation of complement activation, classical pathway"/>
    <property type="evidence" value="ECO:0000266"/>
    <property type="project" value="RGD"/>
</dbReference>
<dbReference type="GO" id="GO:0045732">
    <property type="term" value="P:positive regulation of protein catabolic process"/>
    <property type="evidence" value="ECO:0000266"/>
    <property type="project" value="RGD"/>
</dbReference>
<dbReference type="GO" id="GO:1903027">
    <property type="term" value="P:regulation of opsonization"/>
    <property type="evidence" value="ECO:0000266"/>
    <property type="project" value="RGD"/>
</dbReference>
<dbReference type="GO" id="GO:0009609">
    <property type="term" value="P:response to symbiotic bacterium"/>
    <property type="evidence" value="ECO:0000266"/>
    <property type="project" value="RGD"/>
</dbReference>
<dbReference type="CDD" id="cd00033">
    <property type="entry name" value="CCP"/>
    <property type="match status" value="3"/>
</dbReference>
<dbReference type="FunFam" id="2.10.70.10:FF:000014">
    <property type="entry name" value="Membrane cofactor protein"/>
    <property type="match status" value="1"/>
</dbReference>
<dbReference type="Gene3D" id="2.10.70.10">
    <property type="entry name" value="Complement Module, domain 1"/>
    <property type="match status" value="3"/>
</dbReference>
<dbReference type="InterPro" id="IPR051277">
    <property type="entry name" value="SEZ6_CSMD_C4BPB_Regulators"/>
</dbReference>
<dbReference type="InterPro" id="IPR035976">
    <property type="entry name" value="Sushi/SCR/CCP_sf"/>
</dbReference>
<dbReference type="InterPro" id="IPR000436">
    <property type="entry name" value="Sushi_SCR_CCP_dom"/>
</dbReference>
<dbReference type="PANTHER" id="PTHR45656">
    <property type="entry name" value="PROTEIN CBR-CLEC-78"/>
    <property type="match status" value="1"/>
</dbReference>
<dbReference type="PANTHER" id="PTHR45656:SF4">
    <property type="entry name" value="PROTEIN CBR-CLEC-78"/>
    <property type="match status" value="1"/>
</dbReference>
<dbReference type="Pfam" id="PF00084">
    <property type="entry name" value="Sushi"/>
    <property type="match status" value="3"/>
</dbReference>
<dbReference type="SMART" id="SM00032">
    <property type="entry name" value="CCP"/>
    <property type="match status" value="3"/>
</dbReference>
<dbReference type="SUPFAM" id="SSF57535">
    <property type="entry name" value="Complement control module/SCR domain"/>
    <property type="match status" value="3"/>
</dbReference>
<dbReference type="PROSITE" id="PS50923">
    <property type="entry name" value="SUSHI"/>
    <property type="match status" value="3"/>
</dbReference>
<accession>Q63515</accession>
<comment type="function">
    <text>Controls the classical pathway of complement activation. It binds as a cofactor to C3b/C4b inactivator (C3bINA), which then hydrolyzes the complement fragment C4b. It also accelerates the degradation of the C4bC2a complex (C3 convertase) by dissociating the complement fragment C2a. It also interacts with anticoagulant protein S and with serum amyloid P component.</text>
</comment>
<comment type="subunit">
    <text>Disulfide-linked complex of alpha and beta chains.</text>
</comment>
<comment type="subcellular location">
    <subcellularLocation>
        <location>Secreted</location>
    </subcellularLocation>
</comment>